<dbReference type="EC" id="2.4.1.-" evidence="1"/>
<dbReference type="EMBL" id="AABR07069506">
    <property type="status" value="NOT_ANNOTATED_CDS"/>
    <property type="molecule type" value="Genomic_DNA"/>
</dbReference>
<dbReference type="RefSeq" id="NP_001178720.1">
    <property type="nucleotide sequence ID" value="NM_001191791.2"/>
</dbReference>
<dbReference type="RefSeq" id="NP_001416732.1">
    <property type="nucleotide sequence ID" value="NM_001429803.1"/>
</dbReference>
<dbReference type="RefSeq" id="XP_006242781.1">
    <property type="nucleotide sequence ID" value="XM_006242719.3"/>
</dbReference>
<dbReference type="SMR" id="D4AD75"/>
<dbReference type="FunCoup" id="D4AD75">
    <property type="interactions" value="2399"/>
</dbReference>
<dbReference type="STRING" id="10116.ENSRNOP00000033222"/>
<dbReference type="PhosphoSitePlus" id="D4AD75"/>
<dbReference type="PaxDb" id="10116-ENSRNOP00000033222"/>
<dbReference type="PeptideAtlas" id="D4AD75"/>
<dbReference type="Ensembl" id="ENSRNOT00000036738.7">
    <property type="protein sequence ID" value="ENSRNOP00000033222.4"/>
    <property type="gene ID" value="ENSRNOG00000026589.7"/>
</dbReference>
<dbReference type="GeneID" id="315496"/>
<dbReference type="KEGG" id="rno:315496"/>
<dbReference type="AGR" id="RGD:1305822"/>
<dbReference type="CTD" id="23333"/>
<dbReference type="RGD" id="1305822">
    <property type="gene designation" value="Dpy19l1"/>
</dbReference>
<dbReference type="eggNOG" id="KOG4587">
    <property type="taxonomic scope" value="Eukaryota"/>
</dbReference>
<dbReference type="GeneTree" id="ENSGT00530000063023"/>
<dbReference type="HOGENOM" id="CLU_014404_0_1_1"/>
<dbReference type="InParanoid" id="D4AD75"/>
<dbReference type="OMA" id="YDNITEY"/>
<dbReference type="OrthoDB" id="6019623at2759"/>
<dbReference type="PhylomeDB" id="D4AD75"/>
<dbReference type="TreeFam" id="TF313376"/>
<dbReference type="UniPathway" id="UPA00378"/>
<dbReference type="PRO" id="PR:D4AD75"/>
<dbReference type="Proteomes" id="UP000002494">
    <property type="component" value="Chromosome 8"/>
</dbReference>
<dbReference type="Bgee" id="ENSRNOG00000026589">
    <property type="expression patterns" value="Expressed in Ammon's horn and 19 other cell types or tissues"/>
</dbReference>
<dbReference type="GO" id="GO:0005789">
    <property type="term" value="C:endoplasmic reticulum membrane"/>
    <property type="evidence" value="ECO:0000318"/>
    <property type="project" value="GO_Central"/>
</dbReference>
<dbReference type="GO" id="GO:0000030">
    <property type="term" value="F:mannosyltransferase activity"/>
    <property type="evidence" value="ECO:0000318"/>
    <property type="project" value="GO_Central"/>
</dbReference>
<dbReference type="GO" id="GO:0018103">
    <property type="term" value="P:protein C-linked glycosylation"/>
    <property type="evidence" value="ECO:0007669"/>
    <property type="project" value="Ensembl"/>
</dbReference>
<dbReference type="CDD" id="cd20178">
    <property type="entry name" value="Dpy19L1"/>
    <property type="match status" value="1"/>
</dbReference>
<dbReference type="InterPro" id="IPR018732">
    <property type="entry name" value="Dpy-19/Dpy-19-like"/>
</dbReference>
<dbReference type="InterPro" id="IPR047463">
    <property type="entry name" value="Dpy19L1"/>
</dbReference>
<dbReference type="PANTHER" id="PTHR31488:SF5">
    <property type="entry name" value="C-MANNOSYLTRANSFERASE DPY19L1-RELATED"/>
    <property type="match status" value="1"/>
</dbReference>
<dbReference type="PANTHER" id="PTHR31488">
    <property type="entry name" value="DPY-19-LIKE 1, LIKE (H. SAPIENS)"/>
    <property type="match status" value="1"/>
</dbReference>
<dbReference type="Pfam" id="PF10034">
    <property type="entry name" value="Dpy19"/>
    <property type="match status" value="1"/>
</dbReference>
<sequence>MVLQARSKHRDAAPRPPRPARSSPPPLNGASEVAARELGPERAPPSPGRRSTASRKGPRAETAAPAPDGLAGRLAAGLHWALGLRRGRGRTWSTLLLASFAALLHWSHITQLFENDRHFSHLSTLEREMAFRTEMGLYYSYFKTIVEAPSFLSGVWMIMNDRLTEYPLVINTLKRFNLYPEVILASWYRIYTKIMDLIGIQTKICWTVTRGEGLSPIESCEGLGDPACFYVAVIFMLNGLMMALFFIYGTYLSGSRLGGLVTVLCFFFNHGECTRVMWTPPLRESFSYPFLVLQMLLVTHILRTTQLYRGSLIALCISNVFFMLPWQFAQFVLLTQIASLFAVYVVGYIDTYKLQKIIYTHMISLVLCFVLMFGNSMLLTSYYASSLVIIWGMLAMKPQFLKMNVSELSLWVIQGCCWLFGTVTLKSLTSRIFGIADDAHIGNLLTSKFFSYKDFDTLLYTCAAEFDFMEKETPLRYTKTLLLPVVLAIVAAIGRKIINDMRGVIANQETDVRKHQVDHGELVYHALQLFAYTALGILIMRLKLFLTPHMCVMASLICSRQLFGWLFGKVHPGAVVFAVLAAMSIQGSANLQTQWNIVGEFSNLPQEELIEWIRHSTKPDAVFAGAMPTMASVKLSALRPVVNHPHYEDAGLRARTKIVYSMYSRKAPEDVKKELIKLKVNYYILEESWCIRRSKPGCSMPEIWDVEDPDNAGKTPLCNILVKDSKPHFTTVFQNSVYKVLEVIRQ</sequence>
<organism>
    <name type="scientific">Rattus norvegicus</name>
    <name type="common">Rat</name>
    <dbReference type="NCBI Taxonomy" id="10116"/>
    <lineage>
        <taxon>Eukaryota</taxon>
        <taxon>Metazoa</taxon>
        <taxon>Chordata</taxon>
        <taxon>Craniata</taxon>
        <taxon>Vertebrata</taxon>
        <taxon>Euteleostomi</taxon>
        <taxon>Mammalia</taxon>
        <taxon>Eutheria</taxon>
        <taxon>Euarchontoglires</taxon>
        <taxon>Glires</taxon>
        <taxon>Rodentia</taxon>
        <taxon>Myomorpha</taxon>
        <taxon>Muroidea</taxon>
        <taxon>Muridae</taxon>
        <taxon>Murinae</taxon>
        <taxon>Rattus</taxon>
    </lineage>
</organism>
<keyword id="KW-0256">Endoplasmic reticulum</keyword>
<keyword id="KW-0328">Glycosyltransferase</keyword>
<keyword id="KW-0472">Membrane</keyword>
<keyword id="KW-0597">Phosphoprotein</keyword>
<keyword id="KW-1185">Reference proteome</keyword>
<keyword id="KW-0808">Transferase</keyword>
<keyword id="KW-0812">Transmembrane</keyword>
<keyword id="KW-1133">Transmembrane helix</keyword>
<protein>
    <recommendedName>
        <fullName>Protein C-mannosyl-transferase DPY19L1</fullName>
        <ecNumber evidence="1">2.4.1.-</ecNumber>
    </recommendedName>
    <alternativeName>
        <fullName>Dpy-19-like protein 1</fullName>
    </alternativeName>
    <alternativeName>
        <fullName>Protein dpy-19 homolog 1</fullName>
    </alternativeName>
</protein>
<name>D19L1_RAT</name>
<reference key="1">
    <citation type="journal article" date="2004" name="Nature">
        <title>Genome sequence of the Brown Norway rat yields insights into mammalian evolution.</title>
        <authorList>
            <person name="Gibbs R.A."/>
            <person name="Weinstock G.M."/>
            <person name="Metzker M.L."/>
            <person name="Muzny D.M."/>
            <person name="Sodergren E.J."/>
            <person name="Scherer S."/>
            <person name="Scott G."/>
            <person name="Steffen D."/>
            <person name="Worley K.C."/>
            <person name="Burch P.E."/>
            <person name="Okwuonu G."/>
            <person name="Hines S."/>
            <person name="Lewis L."/>
            <person name="Deramo C."/>
            <person name="Delgado O."/>
            <person name="Dugan-Rocha S."/>
            <person name="Miner G."/>
            <person name="Morgan M."/>
            <person name="Hawes A."/>
            <person name="Gill R."/>
            <person name="Holt R.A."/>
            <person name="Adams M.D."/>
            <person name="Amanatides P.G."/>
            <person name="Baden-Tillson H."/>
            <person name="Barnstead M."/>
            <person name="Chin S."/>
            <person name="Evans C.A."/>
            <person name="Ferriera S."/>
            <person name="Fosler C."/>
            <person name="Glodek A."/>
            <person name="Gu Z."/>
            <person name="Jennings D."/>
            <person name="Kraft C.L."/>
            <person name="Nguyen T."/>
            <person name="Pfannkoch C.M."/>
            <person name="Sitter C."/>
            <person name="Sutton G.G."/>
            <person name="Venter J.C."/>
            <person name="Woodage T."/>
            <person name="Smith D."/>
            <person name="Lee H.-M."/>
            <person name="Gustafson E."/>
            <person name="Cahill P."/>
            <person name="Kana A."/>
            <person name="Doucette-Stamm L."/>
            <person name="Weinstock K."/>
            <person name="Fechtel K."/>
            <person name="Weiss R.B."/>
            <person name="Dunn D.M."/>
            <person name="Green E.D."/>
            <person name="Blakesley R.W."/>
            <person name="Bouffard G.G."/>
            <person name="De Jong P.J."/>
            <person name="Osoegawa K."/>
            <person name="Zhu B."/>
            <person name="Marra M."/>
            <person name="Schein J."/>
            <person name="Bosdet I."/>
            <person name="Fjell C."/>
            <person name="Jones S."/>
            <person name="Krzywinski M."/>
            <person name="Mathewson C."/>
            <person name="Siddiqui A."/>
            <person name="Wye N."/>
            <person name="McPherson J."/>
            <person name="Zhao S."/>
            <person name="Fraser C.M."/>
            <person name="Shetty J."/>
            <person name="Shatsman S."/>
            <person name="Geer K."/>
            <person name="Chen Y."/>
            <person name="Abramzon S."/>
            <person name="Nierman W.C."/>
            <person name="Havlak P.H."/>
            <person name="Chen R."/>
            <person name="Durbin K.J."/>
            <person name="Egan A."/>
            <person name="Ren Y."/>
            <person name="Song X.-Z."/>
            <person name="Li B."/>
            <person name="Liu Y."/>
            <person name="Qin X."/>
            <person name="Cawley S."/>
            <person name="Cooney A.J."/>
            <person name="D'Souza L.M."/>
            <person name="Martin K."/>
            <person name="Wu J.Q."/>
            <person name="Gonzalez-Garay M.L."/>
            <person name="Jackson A.R."/>
            <person name="Kalafus K.J."/>
            <person name="McLeod M.P."/>
            <person name="Milosavljevic A."/>
            <person name="Virk D."/>
            <person name="Volkov A."/>
            <person name="Wheeler D.A."/>
            <person name="Zhang Z."/>
            <person name="Bailey J.A."/>
            <person name="Eichler E.E."/>
            <person name="Tuzun E."/>
            <person name="Birney E."/>
            <person name="Mongin E."/>
            <person name="Ureta-Vidal A."/>
            <person name="Woodwark C."/>
            <person name="Zdobnov E."/>
            <person name="Bork P."/>
            <person name="Suyama M."/>
            <person name="Torrents D."/>
            <person name="Alexandersson M."/>
            <person name="Trask B.J."/>
            <person name="Young J.M."/>
            <person name="Huang H."/>
            <person name="Wang H."/>
            <person name="Xing H."/>
            <person name="Daniels S."/>
            <person name="Gietzen D."/>
            <person name="Schmidt J."/>
            <person name="Stevens K."/>
            <person name="Vitt U."/>
            <person name="Wingrove J."/>
            <person name="Camara F."/>
            <person name="Mar Alba M."/>
            <person name="Abril J.F."/>
            <person name="Guigo R."/>
            <person name="Smit A."/>
            <person name="Dubchak I."/>
            <person name="Rubin E.M."/>
            <person name="Couronne O."/>
            <person name="Poliakov A."/>
            <person name="Huebner N."/>
            <person name="Ganten D."/>
            <person name="Goesele C."/>
            <person name="Hummel O."/>
            <person name="Kreitler T."/>
            <person name="Lee Y.-A."/>
            <person name="Monti J."/>
            <person name="Schulz H."/>
            <person name="Zimdahl H."/>
            <person name="Himmelbauer H."/>
            <person name="Lehrach H."/>
            <person name="Jacob H.J."/>
            <person name="Bromberg S."/>
            <person name="Gullings-Handley J."/>
            <person name="Jensen-Seaman M.I."/>
            <person name="Kwitek A.E."/>
            <person name="Lazar J."/>
            <person name="Pasko D."/>
            <person name="Tonellato P.J."/>
            <person name="Twigger S."/>
            <person name="Ponting C.P."/>
            <person name="Duarte J.M."/>
            <person name="Rice S."/>
            <person name="Goodstadt L."/>
            <person name="Beatson S.A."/>
            <person name="Emes R.D."/>
            <person name="Winter E.E."/>
            <person name="Webber C."/>
            <person name="Brandt P."/>
            <person name="Nyakatura G."/>
            <person name="Adetobi M."/>
            <person name="Chiaromonte F."/>
            <person name="Elnitski L."/>
            <person name="Eswara P."/>
            <person name="Hardison R.C."/>
            <person name="Hou M."/>
            <person name="Kolbe D."/>
            <person name="Makova K."/>
            <person name="Miller W."/>
            <person name="Nekrutenko A."/>
            <person name="Riemer C."/>
            <person name="Schwartz S."/>
            <person name="Taylor J."/>
            <person name="Yang S."/>
            <person name="Zhang Y."/>
            <person name="Lindpaintner K."/>
            <person name="Andrews T.D."/>
            <person name="Caccamo M."/>
            <person name="Clamp M."/>
            <person name="Clarke L."/>
            <person name="Curwen V."/>
            <person name="Durbin R.M."/>
            <person name="Eyras E."/>
            <person name="Searle S.M."/>
            <person name="Cooper G.M."/>
            <person name="Batzoglou S."/>
            <person name="Brudno M."/>
            <person name="Sidow A."/>
            <person name="Stone E.A."/>
            <person name="Payseur B.A."/>
            <person name="Bourque G."/>
            <person name="Lopez-Otin C."/>
            <person name="Puente X.S."/>
            <person name="Chakrabarti K."/>
            <person name="Chatterji S."/>
            <person name="Dewey C."/>
            <person name="Pachter L."/>
            <person name="Bray N."/>
            <person name="Yap V.B."/>
            <person name="Caspi A."/>
            <person name="Tesler G."/>
            <person name="Pevzner P.A."/>
            <person name="Haussler D."/>
            <person name="Roskin K.M."/>
            <person name="Baertsch R."/>
            <person name="Clawson H."/>
            <person name="Furey T.S."/>
            <person name="Hinrichs A.S."/>
            <person name="Karolchik D."/>
            <person name="Kent W.J."/>
            <person name="Rosenbloom K.R."/>
            <person name="Trumbower H."/>
            <person name="Weirauch M."/>
            <person name="Cooper D.N."/>
            <person name="Stenson P.D."/>
            <person name="Ma B."/>
            <person name="Brent M."/>
            <person name="Arumugam M."/>
            <person name="Shteynberg D."/>
            <person name="Copley R.R."/>
            <person name="Taylor M.S."/>
            <person name="Riethman H."/>
            <person name="Mudunuri U."/>
            <person name="Peterson J."/>
            <person name="Guyer M."/>
            <person name="Felsenfeld A."/>
            <person name="Old S."/>
            <person name="Mockrin S."/>
            <person name="Collins F.S."/>
        </authorList>
    </citation>
    <scope>NUCLEOTIDE SEQUENCE [LARGE SCALE GENOMIC DNA]</scope>
    <source>
        <strain>Brown Norway</strain>
    </source>
</reference>
<gene>
    <name type="primary">Dpy19l1</name>
</gene>
<comment type="function">
    <text evidence="1">C-mannosyltransferase that mediates the C-mannosylation tryptophan residues on target proteins. The reaction occurs on the luminal side of the endoplasmic reticulum and involves the transfer of a mannose unit from a dolichylphosphate mannose (Dol-P-Man) donor to an acceptor protein containing a WxxW consensus sequence. C-mannosylates the first two tryptophans in the WxxWxxWxxC sequence motif in thrombospondin (TSP) type-1 repeats of UNC5A. Regulates neurite extension during development.</text>
</comment>
<comment type="catalytic activity">
    <reaction evidence="1">
        <text>L-tryptophyl-[protein] + a di-trans,poly-cis-dolichyl beta-D-mannosyl phosphate = C-alpha-D-mannosyl-L-tryptophyl-[protein] + a di-trans,poly-cis-dolichyl phosphate + H(+)</text>
        <dbReference type="Rhea" id="RHEA:77219"/>
        <dbReference type="Rhea" id="RHEA-COMP:15365"/>
        <dbReference type="Rhea" id="RHEA-COMP:18864"/>
        <dbReference type="Rhea" id="RHEA-COMP:19498"/>
        <dbReference type="Rhea" id="RHEA-COMP:19501"/>
        <dbReference type="ChEBI" id="CHEBI:15378"/>
        <dbReference type="ChEBI" id="CHEBI:29954"/>
        <dbReference type="ChEBI" id="CHEBI:57683"/>
        <dbReference type="ChEBI" id="CHEBI:58211"/>
        <dbReference type="ChEBI" id="CHEBI:195646"/>
    </reaction>
    <physiologicalReaction direction="left-to-right" evidence="1">
        <dbReference type="Rhea" id="RHEA:77220"/>
    </physiologicalReaction>
</comment>
<comment type="pathway">
    <text evidence="1">Protein modification; protein glycosylation.</text>
</comment>
<comment type="subcellular location">
    <subcellularLocation>
        <location evidence="1">Endoplasmic reticulum membrane</location>
        <topology evidence="1">Multi-pass membrane protein</topology>
    </subcellularLocation>
</comment>
<comment type="similarity">
    <text evidence="4">Belongs to the dpy-19 family.</text>
</comment>
<feature type="chain" id="PRO_0000459312" description="Protein C-mannosyl-transferase DPY19L1">
    <location>
        <begin position="1"/>
        <end position="746"/>
    </location>
</feature>
<feature type="transmembrane region" description="Helical" evidence="2">
    <location>
        <begin position="93"/>
        <end position="113"/>
    </location>
</feature>
<feature type="transmembrane region" description="Helical" evidence="2">
    <location>
        <begin position="139"/>
        <end position="159"/>
    </location>
</feature>
<feature type="transmembrane region" description="Helical" evidence="2">
    <location>
        <begin position="227"/>
        <end position="247"/>
    </location>
</feature>
<feature type="transmembrane region" description="Helical" evidence="2">
    <location>
        <begin position="248"/>
        <end position="268"/>
    </location>
</feature>
<feature type="transmembrane region" description="Helical" evidence="2">
    <location>
        <begin position="308"/>
        <end position="328"/>
    </location>
</feature>
<feature type="transmembrane region" description="Helical" evidence="2">
    <location>
        <begin position="329"/>
        <end position="349"/>
    </location>
</feature>
<feature type="transmembrane region" description="Helical" evidence="2">
    <location>
        <begin position="357"/>
        <end position="377"/>
    </location>
</feature>
<feature type="transmembrane region" description="Helical" evidence="2">
    <location>
        <begin position="378"/>
        <end position="398"/>
    </location>
</feature>
<feature type="transmembrane region" description="Helical" evidence="2">
    <location>
        <begin position="405"/>
        <end position="425"/>
    </location>
</feature>
<feature type="transmembrane region" description="Helical" evidence="2">
    <location>
        <begin position="481"/>
        <end position="501"/>
    </location>
</feature>
<feature type="transmembrane region" description="Helical" evidence="2">
    <location>
        <begin position="520"/>
        <end position="540"/>
    </location>
</feature>
<feature type="transmembrane region" description="Helical" evidence="2">
    <location>
        <begin position="562"/>
        <end position="582"/>
    </location>
</feature>
<feature type="region of interest" description="Disordered" evidence="3">
    <location>
        <begin position="1"/>
        <end position="68"/>
    </location>
</feature>
<feature type="compositionally biased region" description="Pro residues" evidence="3">
    <location>
        <begin position="14"/>
        <end position="27"/>
    </location>
</feature>
<evidence type="ECO:0000250" key="1">
    <source>
        <dbReference type="UniProtKB" id="A6X919"/>
    </source>
</evidence>
<evidence type="ECO:0000255" key="2"/>
<evidence type="ECO:0000256" key="3">
    <source>
        <dbReference type="SAM" id="MobiDB-lite"/>
    </source>
</evidence>
<evidence type="ECO:0000305" key="4"/>
<proteinExistence type="inferred from homology"/>
<accession>D4AD75</accession>